<dbReference type="EC" id="5.4.99.22"/>
<dbReference type="EMBL" id="AE009442">
    <property type="protein sequence ID" value="AAO29315.1"/>
    <property type="molecule type" value="Genomic_DNA"/>
</dbReference>
<dbReference type="RefSeq" id="WP_004088470.1">
    <property type="nucleotide sequence ID" value="NC_004556.1"/>
</dbReference>
<dbReference type="SMR" id="Q87BI2"/>
<dbReference type="GeneID" id="93905292"/>
<dbReference type="KEGG" id="xft:PD_1471"/>
<dbReference type="HOGENOM" id="CLU_024979_5_2_6"/>
<dbReference type="Proteomes" id="UP000002516">
    <property type="component" value="Chromosome"/>
</dbReference>
<dbReference type="GO" id="GO:0160139">
    <property type="term" value="F:23S rRNA pseudouridine(2605) synthase activity"/>
    <property type="evidence" value="ECO:0007669"/>
    <property type="project" value="UniProtKB-EC"/>
</dbReference>
<dbReference type="GO" id="GO:0003723">
    <property type="term" value="F:RNA binding"/>
    <property type="evidence" value="ECO:0007669"/>
    <property type="project" value="UniProtKB-KW"/>
</dbReference>
<dbReference type="GO" id="GO:0000455">
    <property type="term" value="P:enzyme-directed rRNA pseudouridine synthesis"/>
    <property type="evidence" value="ECO:0007669"/>
    <property type="project" value="UniProtKB-ARBA"/>
</dbReference>
<dbReference type="CDD" id="cd00165">
    <property type="entry name" value="S4"/>
    <property type="match status" value="1"/>
</dbReference>
<dbReference type="FunFam" id="3.10.290.10:FF:000003">
    <property type="entry name" value="Pseudouridine synthase"/>
    <property type="match status" value="1"/>
</dbReference>
<dbReference type="FunFam" id="3.30.70.1560:FF:000001">
    <property type="entry name" value="Pseudouridine synthase"/>
    <property type="match status" value="1"/>
</dbReference>
<dbReference type="FunFam" id="3.30.70.580:FF:000009">
    <property type="entry name" value="Pseudouridine synthase"/>
    <property type="match status" value="1"/>
</dbReference>
<dbReference type="Gene3D" id="3.30.70.1560">
    <property type="entry name" value="Alpha-L RNA-binding motif"/>
    <property type="match status" value="1"/>
</dbReference>
<dbReference type="Gene3D" id="3.30.70.580">
    <property type="entry name" value="Pseudouridine synthase I, catalytic domain, N-terminal subdomain"/>
    <property type="match status" value="1"/>
</dbReference>
<dbReference type="Gene3D" id="3.10.290.10">
    <property type="entry name" value="RNA-binding S4 domain"/>
    <property type="match status" value="1"/>
</dbReference>
<dbReference type="InterPro" id="IPR042092">
    <property type="entry name" value="PsdUridine_s_RsuA/RluB/E/F_cat"/>
</dbReference>
<dbReference type="InterPro" id="IPR020103">
    <property type="entry name" value="PsdUridine_synth_cat_dom_sf"/>
</dbReference>
<dbReference type="InterPro" id="IPR006145">
    <property type="entry name" value="PsdUridine_synth_RsuA/RluA"/>
</dbReference>
<dbReference type="InterPro" id="IPR000748">
    <property type="entry name" value="PsdUridine_synth_RsuA/RluB/E/F"/>
</dbReference>
<dbReference type="InterPro" id="IPR018496">
    <property type="entry name" value="PsdUridine_synth_RsuA/RluB_CS"/>
</dbReference>
<dbReference type="InterPro" id="IPR050343">
    <property type="entry name" value="RsuA_PseudoU_synthase"/>
</dbReference>
<dbReference type="InterPro" id="IPR002942">
    <property type="entry name" value="S4_RNA-bd"/>
</dbReference>
<dbReference type="InterPro" id="IPR036986">
    <property type="entry name" value="S4_RNA-bd_sf"/>
</dbReference>
<dbReference type="InterPro" id="IPR020094">
    <property type="entry name" value="TruA/RsuA/RluB/E/F_N"/>
</dbReference>
<dbReference type="NCBIfam" id="NF007976">
    <property type="entry name" value="PRK10700.1"/>
    <property type="match status" value="1"/>
</dbReference>
<dbReference type="NCBIfam" id="TIGR00093">
    <property type="entry name" value="pseudouridine synthase"/>
    <property type="match status" value="1"/>
</dbReference>
<dbReference type="PANTHER" id="PTHR47683">
    <property type="entry name" value="PSEUDOURIDINE SYNTHASE FAMILY PROTEIN-RELATED"/>
    <property type="match status" value="1"/>
</dbReference>
<dbReference type="PANTHER" id="PTHR47683:SF3">
    <property type="entry name" value="RIBOSOMAL LARGE SUBUNIT PSEUDOURIDINE SYNTHASE B"/>
    <property type="match status" value="1"/>
</dbReference>
<dbReference type="Pfam" id="PF00849">
    <property type="entry name" value="PseudoU_synth_2"/>
    <property type="match status" value="1"/>
</dbReference>
<dbReference type="Pfam" id="PF01479">
    <property type="entry name" value="S4"/>
    <property type="match status" value="1"/>
</dbReference>
<dbReference type="SMART" id="SM00363">
    <property type="entry name" value="S4"/>
    <property type="match status" value="1"/>
</dbReference>
<dbReference type="SUPFAM" id="SSF55174">
    <property type="entry name" value="Alpha-L RNA-binding motif"/>
    <property type="match status" value="1"/>
</dbReference>
<dbReference type="SUPFAM" id="SSF55120">
    <property type="entry name" value="Pseudouridine synthase"/>
    <property type="match status" value="1"/>
</dbReference>
<dbReference type="PROSITE" id="PS01149">
    <property type="entry name" value="PSI_RSU"/>
    <property type="match status" value="1"/>
</dbReference>
<dbReference type="PROSITE" id="PS50889">
    <property type="entry name" value="S4"/>
    <property type="match status" value="1"/>
</dbReference>
<sequence length="476" mass="53211">MSDTPKPPSNTLSLKRETATEAPKLEERLHKVLAQAGLGSRRALEQRISNGLIKVNGDIAQLGMSVKSGDKIELDGRSFVASALTEPARVLIYNKPEGEVTTREDPEGRPTVFETLPVLKGARWIAIGRLDINTTGLLLLTTDGELANAMMHPSSEIEREYVVRVRSPEGEEHVQDELLEQLTRGVMLEDGTAKFDTIERIGNTDSHDWFRVVVKEGRNREVRRLWESQGCQVSRLKRTRYGSVLLPRELLRGQSTELPKTQVEALRTQLKLEKDMPLALTLQPVIGQRRSAKATLHVNRNDNNKHAYHNNHSTADESRELRRFDTLRDDRGRGQGKHHFKDRLTVSGEAAAKQAHKPFKQYKPKNDRSLSEGSPATFQSWYVPEGVSTGPRNHRNAGAGNGAHPNKKSPNPNTRNTQGQQTRKSPYKYTNNAPNFPSDHATPTFNPYGNPGQKTGAGQPNNSGGKYNRNRGPRYP</sequence>
<comment type="function">
    <text evidence="1">Responsible for synthesis of pseudouridine from uracil-2605 in 23S ribosomal RNA.</text>
</comment>
<comment type="catalytic activity">
    <reaction>
        <text>uridine(2605) in 23S rRNA = pseudouridine(2605) in 23S rRNA</text>
        <dbReference type="Rhea" id="RHEA:42520"/>
        <dbReference type="Rhea" id="RHEA-COMP:10095"/>
        <dbReference type="Rhea" id="RHEA-COMP:10096"/>
        <dbReference type="ChEBI" id="CHEBI:65314"/>
        <dbReference type="ChEBI" id="CHEBI:65315"/>
        <dbReference type="EC" id="5.4.99.22"/>
    </reaction>
</comment>
<comment type="similarity">
    <text evidence="4">Belongs to the pseudouridine synthase RsuA family.</text>
</comment>
<evidence type="ECO:0000250" key="1"/>
<evidence type="ECO:0000255" key="2">
    <source>
        <dbReference type="PROSITE-ProRule" id="PRU00182"/>
    </source>
</evidence>
<evidence type="ECO:0000256" key="3">
    <source>
        <dbReference type="SAM" id="MobiDB-lite"/>
    </source>
</evidence>
<evidence type="ECO:0000305" key="4"/>
<gene>
    <name type="primary">rluB</name>
    <name type="ordered locus">PD_1471</name>
</gene>
<reference key="1">
    <citation type="journal article" date="2003" name="J. Bacteriol.">
        <title>Comparative analyses of the complete genome sequences of Pierce's disease and citrus variegated chlorosis strains of Xylella fastidiosa.</title>
        <authorList>
            <person name="Van Sluys M.A."/>
            <person name="de Oliveira M.C."/>
            <person name="Monteiro-Vitorello C.B."/>
            <person name="Miyaki C.Y."/>
            <person name="Furlan L.R."/>
            <person name="Camargo L.E.A."/>
            <person name="da Silva A.C.R."/>
            <person name="Moon D.H."/>
            <person name="Takita M.A."/>
            <person name="Lemos E.G.M."/>
            <person name="Machado M.A."/>
            <person name="Ferro M.I.T."/>
            <person name="da Silva F.R."/>
            <person name="Goldman M.H.S."/>
            <person name="Goldman G.H."/>
            <person name="Lemos M.V.F."/>
            <person name="El-Dorry H."/>
            <person name="Tsai S.M."/>
            <person name="Carrer H."/>
            <person name="Carraro D.M."/>
            <person name="de Oliveira R.C."/>
            <person name="Nunes L.R."/>
            <person name="Siqueira W.J."/>
            <person name="Coutinho L.L."/>
            <person name="Kimura E.T."/>
            <person name="Ferro E.S."/>
            <person name="Harakava R."/>
            <person name="Kuramae E.E."/>
            <person name="Marino C.L."/>
            <person name="Giglioti E."/>
            <person name="Abreu I.L."/>
            <person name="Alves L.M.C."/>
            <person name="do Amaral A.M."/>
            <person name="Baia G.S."/>
            <person name="Blanco S.R."/>
            <person name="Brito M.S."/>
            <person name="Cannavan F.S."/>
            <person name="Celestino A.V."/>
            <person name="da Cunha A.F."/>
            <person name="Fenille R.C."/>
            <person name="Ferro J.A."/>
            <person name="Formighieri E.F."/>
            <person name="Kishi L.T."/>
            <person name="Leoni S.G."/>
            <person name="Oliveira A.R."/>
            <person name="Rosa V.E. Jr."/>
            <person name="Sassaki F.T."/>
            <person name="Sena J.A.D."/>
            <person name="de Souza A.A."/>
            <person name="Truffi D."/>
            <person name="Tsukumo F."/>
            <person name="Yanai G.M."/>
            <person name="Zaros L.G."/>
            <person name="Civerolo E.L."/>
            <person name="Simpson A.J.G."/>
            <person name="Almeida N.F. Jr."/>
            <person name="Setubal J.C."/>
            <person name="Kitajima J.P."/>
        </authorList>
    </citation>
    <scope>NUCLEOTIDE SEQUENCE [LARGE SCALE GENOMIC DNA]</scope>
    <source>
        <strain>Temecula1 / ATCC 700964</strain>
    </source>
</reference>
<name>RLUB_XYLFT</name>
<proteinExistence type="inferred from homology"/>
<keyword id="KW-0413">Isomerase</keyword>
<keyword id="KW-1185">Reference proteome</keyword>
<keyword id="KW-0694">RNA-binding</keyword>
<keyword id="KW-0698">rRNA processing</keyword>
<organism>
    <name type="scientific">Xylella fastidiosa (strain Temecula1 / ATCC 700964)</name>
    <dbReference type="NCBI Taxonomy" id="183190"/>
    <lineage>
        <taxon>Bacteria</taxon>
        <taxon>Pseudomonadati</taxon>
        <taxon>Pseudomonadota</taxon>
        <taxon>Gammaproteobacteria</taxon>
        <taxon>Lysobacterales</taxon>
        <taxon>Lysobacteraceae</taxon>
        <taxon>Xylella</taxon>
    </lineage>
</organism>
<accession>Q87BI2</accession>
<feature type="chain" id="PRO_0000099998" description="Ribosomal large subunit pseudouridine synthase B">
    <location>
        <begin position="1"/>
        <end position="476"/>
    </location>
</feature>
<feature type="domain" description="S4 RNA-binding" evidence="2">
    <location>
        <begin position="27"/>
        <end position="96"/>
    </location>
</feature>
<feature type="region of interest" description="Disordered" evidence="3">
    <location>
        <begin position="299"/>
        <end position="476"/>
    </location>
</feature>
<feature type="compositionally biased region" description="Basic and acidic residues" evidence="3">
    <location>
        <begin position="314"/>
        <end position="333"/>
    </location>
</feature>
<feature type="compositionally biased region" description="Basic residues" evidence="3">
    <location>
        <begin position="354"/>
        <end position="363"/>
    </location>
</feature>
<feature type="compositionally biased region" description="Polar residues" evidence="3">
    <location>
        <begin position="371"/>
        <end position="380"/>
    </location>
</feature>
<feature type="compositionally biased region" description="Polar residues" evidence="3">
    <location>
        <begin position="408"/>
        <end position="465"/>
    </location>
</feature>
<feature type="active site" description="Nucleophile" evidence="1">
    <location>
        <position position="131"/>
    </location>
</feature>
<protein>
    <recommendedName>
        <fullName>Ribosomal large subunit pseudouridine synthase B</fullName>
        <ecNumber>5.4.99.22</ecNumber>
    </recommendedName>
    <alternativeName>
        <fullName>23S rRNA pseudouridine(2605) synthase</fullName>
    </alternativeName>
    <alternativeName>
        <fullName>rRNA pseudouridylate synthase B</fullName>
    </alternativeName>
    <alternativeName>
        <fullName>rRNA-uridine isomerase B</fullName>
    </alternativeName>
</protein>